<organism>
    <name type="scientific">Glycine max</name>
    <name type="common">Soybean</name>
    <name type="synonym">Glycine hispida</name>
    <dbReference type="NCBI Taxonomy" id="3847"/>
    <lineage>
        <taxon>Eukaryota</taxon>
        <taxon>Viridiplantae</taxon>
        <taxon>Streptophyta</taxon>
        <taxon>Embryophyta</taxon>
        <taxon>Tracheophyta</taxon>
        <taxon>Spermatophyta</taxon>
        <taxon>Magnoliopsida</taxon>
        <taxon>eudicotyledons</taxon>
        <taxon>Gunneridae</taxon>
        <taxon>Pentapetalae</taxon>
        <taxon>rosids</taxon>
        <taxon>fabids</taxon>
        <taxon>Fabales</taxon>
        <taxon>Fabaceae</taxon>
        <taxon>Papilionoideae</taxon>
        <taxon>50 kb inversion clade</taxon>
        <taxon>NPAAA clade</taxon>
        <taxon>indigoferoid/millettioid clade</taxon>
        <taxon>Phaseoleae</taxon>
        <taxon>Glycine</taxon>
        <taxon>Glycine subgen. Soja</taxon>
    </lineage>
</organism>
<sequence length="1131" mass="125734">MSTSRPSQSSSNSRRSRHSARMAQATVDAKIHATFEESGSSFDYSSSVRVSGTADGVNQPRSDKVTTAYLRGKMIQPFGCLLAIDEKNHMQTCKVIAYSENEPEMLTMVSHAVPSVGDHPALGIGTDIKTLFTAPSVSGLQKALGCADVSLLNPILVHCKTSGKPFYAIVHRVTGSLIVDFEPVKPYEVPMTAAGALQSYKLAAKAITRLQSLPSGNMERLCDTMVQEVFELTGYDRVMAYKFHEDDHGEVIREITKPCLEPYLGLHYPATDIPQASRFLFRKNKVRMIVDCHAKHVRVLQDEKLQFDLILCGSTLRAPHSCHAQYMANMDSIASLVLAVVVNDNEEDGDTDAVQPQKTERLWGLVVCHNTTPRFVPFPLRYAREFLPQVFADHVHKEIELEYQIIEKNILHHPGHLLCMLMRDAPLGIASESPNIMDLVKCDGAALIYRNKVWRLGVTPSEPQIREIALWLSEYHMDSTSFSTDSLFDAGFPSALSLGDVVCGMASVRVTAKDMVFWFRSHTAAEIRWGGAKHEAGEKDDSRRMHPRSSFKAFLEVVKARSLPWKEYEMDAIHSLQIILRNAFKEDTESLDLNAKAINTRLRDLKIEGINDLKIERMQELEAVTSEIVRLDYTATVPILAVDVDGLVNGWNIKIAELTGLPIGEATGKHLLTLVEDSSTDRVKKMLNLALLGEEEKNVQFEIKTLGSKMDSGPISLVVNRCASRDLRDNVVGVCFVAHDITAQKNVMDKFIRIEGDYKAIVQNRNPLIPPIFGTDEFGWCCEWNPAMMKLTGWKREEVMDKMLLGEIFGTQMAACRLKNQEAFVNLGVVLNKAMTGSETEKVPFGFFARNGKYVECLLSVSKKLDVEGLVTGVFCFLQLASPELQQALHIQRLSEQTASKRLNALSYMKRQIRNPLCGIVFSRKMLEGTDLGTEQKQLLRTSAQCQQQLSKILDDSDLDTIIDGYLDLEMAEFTLHEVLVTSLSQVMEKSNGKSIRIVNDVAGHIMMETLYGDSLRLQQVLADFLLISINFTPNGGQVVVAGSLTKEQLGKSVHLVKLELSITHGGSGVPEVLLNQMFGNNGLESEEGISLLIRAKLLKLMNGDVRYLREAGKSAFILSAELAAAHNLKA</sequence>
<protein>
    <recommendedName>
        <fullName>Phytochrome A</fullName>
    </recommendedName>
</protein>
<accession>P42500</accession>
<proteinExistence type="evidence at transcript level"/>
<reference key="1">
    <citation type="submission" date="1994-07" db="EMBL/GenBank/DDBJ databases">
        <authorList>
            <person name="Hahn T.R."/>
            <person name="Lee J.H."/>
            <person name="Seo H.S."/>
            <person name="Choi Y.D."/>
        </authorList>
    </citation>
    <scope>NUCLEOTIDE SEQUENCE [GENOMIC DNA / MRNA]</scope>
    <source>
        <strain>cv. Paldal</strain>
        <tissue>Etiolated leaf</tissue>
    </source>
</reference>
<keyword id="KW-0157">Chromophore</keyword>
<keyword id="KW-0600">Photoreceptor protein</keyword>
<keyword id="KW-0607">Phytochrome signaling pathway</keyword>
<keyword id="KW-0675">Receptor</keyword>
<keyword id="KW-1185">Reference proteome</keyword>
<keyword id="KW-0677">Repeat</keyword>
<keyword id="KW-0716">Sensory transduction</keyword>
<keyword id="KW-0804">Transcription</keyword>
<keyword id="KW-0805">Transcription regulation</keyword>
<feature type="chain" id="PRO_0000171990" description="Phytochrome A">
    <location>
        <begin position="1"/>
        <end position="1131"/>
    </location>
</feature>
<feature type="domain" description="GAF" evidence="6">
    <location>
        <begin position="217"/>
        <end position="399"/>
    </location>
</feature>
<feature type="domain" description="PAS 1" evidence="4">
    <location>
        <begin position="624"/>
        <end position="694"/>
    </location>
</feature>
<feature type="domain" description="PAS 2" evidence="4">
    <location>
        <begin position="757"/>
        <end position="831"/>
    </location>
</feature>
<feature type="domain" description="Histidine kinase" evidence="3">
    <location>
        <begin position="908"/>
        <end position="1127"/>
    </location>
</feature>
<feature type="region of interest" description="Disordered" evidence="5">
    <location>
        <begin position="1"/>
        <end position="27"/>
    </location>
</feature>
<feature type="compositionally biased region" description="Low complexity" evidence="5">
    <location>
        <begin position="1"/>
        <end position="13"/>
    </location>
</feature>
<feature type="binding site" description="covalent" evidence="1">
    <location>
        <position position="322"/>
    </location>
    <ligand>
        <name>phytochromobilin</name>
        <dbReference type="ChEBI" id="CHEBI:189064"/>
    </ligand>
</feature>
<gene>
    <name type="primary">PHYA</name>
</gene>
<name>PHYA_SOYBN</name>
<dbReference type="EMBL" id="L34844">
    <property type="protein sequence ID" value="AAA33999.1"/>
    <property type="molecule type" value="mRNA"/>
</dbReference>
<dbReference type="EMBL" id="L34842">
    <property type="protein sequence ID" value="AAA33957.1"/>
    <property type="molecule type" value="Genomic_DNA"/>
</dbReference>
<dbReference type="PIR" id="T07137">
    <property type="entry name" value="T07137"/>
</dbReference>
<dbReference type="RefSeq" id="NP_001238286.1">
    <property type="nucleotide sequence ID" value="NM_001251357.1"/>
</dbReference>
<dbReference type="SMR" id="P42500"/>
<dbReference type="FunCoup" id="P42500">
    <property type="interactions" value="236"/>
</dbReference>
<dbReference type="STRING" id="3847.P42500"/>
<dbReference type="PaxDb" id="3847-GLYMA10G28170.3"/>
<dbReference type="GeneID" id="547810"/>
<dbReference type="KEGG" id="gmx:547810"/>
<dbReference type="eggNOG" id="ENOG502QRSA">
    <property type="taxonomic scope" value="Eukaryota"/>
</dbReference>
<dbReference type="InParanoid" id="P42500"/>
<dbReference type="OrthoDB" id="2015534at2759"/>
<dbReference type="Proteomes" id="UP000008827">
    <property type="component" value="Unplaced"/>
</dbReference>
<dbReference type="GO" id="GO:0005634">
    <property type="term" value="C:nucleus"/>
    <property type="evidence" value="ECO:0000318"/>
    <property type="project" value="GO_Central"/>
</dbReference>
<dbReference type="GO" id="GO:0000155">
    <property type="term" value="F:phosphorelay sensor kinase activity"/>
    <property type="evidence" value="ECO:0007669"/>
    <property type="project" value="InterPro"/>
</dbReference>
<dbReference type="GO" id="GO:0009881">
    <property type="term" value="F:photoreceptor activity"/>
    <property type="evidence" value="ECO:0007669"/>
    <property type="project" value="UniProtKB-KW"/>
</dbReference>
<dbReference type="GO" id="GO:0042803">
    <property type="term" value="F:protein homodimerization activity"/>
    <property type="evidence" value="ECO:0007669"/>
    <property type="project" value="InterPro"/>
</dbReference>
<dbReference type="GO" id="GO:0009584">
    <property type="term" value="P:detection of visible light"/>
    <property type="evidence" value="ECO:0007669"/>
    <property type="project" value="InterPro"/>
</dbReference>
<dbReference type="GO" id="GO:0009585">
    <property type="term" value="P:red, far-red light phototransduction"/>
    <property type="evidence" value="ECO:0007669"/>
    <property type="project" value="UniProtKB-KW"/>
</dbReference>
<dbReference type="GO" id="GO:0006355">
    <property type="term" value="P:regulation of DNA-templated transcription"/>
    <property type="evidence" value="ECO:0007669"/>
    <property type="project" value="InterPro"/>
</dbReference>
<dbReference type="CDD" id="cd00130">
    <property type="entry name" value="PAS"/>
    <property type="match status" value="2"/>
</dbReference>
<dbReference type="FunFam" id="3.30.450.270:FF:000001">
    <property type="entry name" value="Phytochrome"/>
    <property type="match status" value="1"/>
</dbReference>
<dbReference type="Gene3D" id="3.30.450.270">
    <property type="match status" value="1"/>
</dbReference>
<dbReference type="Gene3D" id="3.30.450.40">
    <property type="match status" value="1"/>
</dbReference>
<dbReference type="Gene3D" id="3.30.565.10">
    <property type="entry name" value="Histidine kinase-like ATPase, C-terminal domain"/>
    <property type="match status" value="1"/>
</dbReference>
<dbReference type="Gene3D" id="3.30.450.20">
    <property type="entry name" value="PAS domain"/>
    <property type="match status" value="3"/>
</dbReference>
<dbReference type="InterPro" id="IPR003018">
    <property type="entry name" value="GAF"/>
</dbReference>
<dbReference type="InterPro" id="IPR029016">
    <property type="entry name" value="GAF-like_dom_sf"/>
</dbReference>
<dbReference type="InterPro" id="IPR036890">
    <property type="entry name" value="HATPase_C_sf"/>
</dbReference>
<dbReference type="InterPro" id="IPR005467">
    <property type="entry name" value="His_kinase_dom"/>
</dbReference>
<dbReference type="InterPro" id="IPR003661">
    <property type="entry name" value="HisK_dim/P_dom"/>
</dbReference>
<dbReference type="InterPro" id="IPR000014">
    <property type="entry name" value="PAS"/>
</dbReference>
<dbReference type="InterPro" id="IPR035965">
    <property type="entry name" value="PAS-like_dom_sf"/>
</dbReference>
<dbReference type="InterPro" id="IPR013654">
    <property type="entry name" value="PAS_2"/>
</dbReference>
<dbReference type="InterPro" id="IPR013767">
    <property type="entry name" value="PAS_fold"/>
</dbReference>
<dbReference type="InterPro" id="IPR016132">
    <property type="entry name" value="Phyto_chromo_attachment"/>
</dbReference>
<dbReference type="InterPro" id="IPR013516">
    <property type="entry name" value="Phyto_chromo_BS"/>
</dbReference>
<dbReference type="InterPro" id="IPR001294">
    <property type="entry name" value="Phytochrome"/>
</dbReference>
<dbReference type="InterPro" id="IPR012129">
    <property type="entry name" value="Phytochrome_A-E"/>
</dbReference>
<dbReference type="InterPro" id="IPR013515">
    <property type="entry name" value="Phytochrome_cen-reg"/>
</dbReference>
<dbReference type="InterPro" id="IPR043150">
    <property type="entry name" value="Phytochrome_PHY_sf"/>
</dbReference>
<dbReference type="NCBIfam" id="TIGR00229">
    <property type="entry name" value="sensory_box"/>
    <property type="match status" value="1"/>
</dbReference>
<dbReference type="PANTHER" id="PTHR47876">
    <property type="entry name" value="OS08G0260000 PROTEIN"/>
    <property type="match status" value="1"/>
</dbReference>
<dbReference type="PANTHER" id="PTHR47876:SF3">
    <property type="entry name" value="PHYTOCHROME 1"/>
    <property type="match status" value="1"/>
</dbReference>
<dbReference type="Pfam" id="PF01590">
    <property type="entry name" value="GAF"/>
    <property type="match status" value="1"/>
</dbReference>
<dbReference type="Pfam" id="PF02518">
    <property type="entry name" value="HATPase_c"/>
    <property type="match status" value="1"/>
</dbReference>
<dbReference type="Pfam" id="PF00512">
    <property type="entry name" value="HisKA"/>
    <property type="match status" value="1"/>
</dbReference>
<dbReference type="Pfam" id="PF00989">
    <property type="entry name" value="PAS"/>
    <property type="match status" value="2"/>
</dbReference>
<dbReference type="Pfam" id="PF08446">
    <property type="entry name" value="PAS_2"/>
    <property type="match status" value="1"/>
</dbReference>
<dbReference type="Pfam" id="PF00360">
    <property type="entry name" value="PHY"/>
    <property type="match status" value="1"/>
</dbReference>
<dbReference type="PIRSF" id="PIRSF000084">
    <property type="entry name" value="Phytochrome"/>
    <property type="match status" value="1"/>
</dbReference>
<dbReference type="PRINTS" id="PR01033">
    <property type="entry name" value="PHYTOCHROME"/>
</dbReference>
<dbReference type="SMART" id="SM00065">
    <property type="entry name" value="GAF"/>
    <property type="match status" value="1"/>
</dbReference>
<dbReference type="SMART" id="SM00387">
    <property type="entry name" value="HATPase_c"/>
    <property type="match status" value="1"/>
</dbReference>
<dbReference type="SMART" id="SM00388">
    <property type="entry name" value="HisKA"/>
    <property type="match status" value="1"/>
</dbReference>
<dbReference type="SMART" id="SM00091">
    <property type="entry name" value="PAS"/>
    <property type="match status" value="2"/>
</dbReference>
<dbReference type="SUPFAM" id="SSF55874">
    <property type="entry name" value="ATPase domain of HSP90 chaperone/DNA topoisomerase II/histidine kinase"/>
    <property type="match status" value="1"/>
</dbReference>
<dbReference type="SUPFAM" id="SSF55781">
    <property type="entry name" value="GAF domain-like"/>
    <property type="match status" value="2"/>
</dbReference>
<dbReference type="SUPFAM" id="SSF55785">
    <property type="entry name" value="PYP-like sensor domain (PAS domain)"/>
    <property type="match status" value="3"/>
</dbReference>
<dbReference type="PROSITE" id="PS50109">
    <property type="entry name" value="HIS_KIN"/>
    <property type="match status" value="1"/>
</dbReference>
<dbReference type="PROSITE" id="PS50112">
    <property type="entry name" value="PAS"/>
    <property type="match status" value="2"/>
</dbReference>
<dbReference type="PROSITE" id="PS00245">
    <property type="entry name" value="PHYTOCHROME_1"/>
    <property type="match status" value="1"/>
</dbReference>
<dbReference type="PROSITE" id="PS50046">
    <property type="entry name" value="PHYTOCHROME_2"/>
    <property type="match status" value="1"/>
</dbReference>
<comment type="function">
    <text evidence="2">Regulatory photoreceptor which exists in two forms that are reversibly interconvertible by light: the Pr form that absorbs maximally in the red region of the spectrum and the Pfr form that absorbs maximally in the far-red region. Photoconversion of Pr to Pfr induces an array of morphogenic responses, whereas reconversion of Pfr to Pr cancels the induction of those responses. Pfr controls the expression of a number of nuclear genes including those encoding the small subunit of ribulose-bisphosphate carboxylase, chlorophyll A/B binding protein, protochlorophyllide reductase, rRNA, etc. It also controls the expression of its own gene(s) in a negative feedback fashion.</text>
</comment>
<comment type="subunit">
    <text evidence="2">Homodimer.</text>
</comment>
<comment type="PTM">
    <text evidence="1">Contains one covalently linked phytochromobilin chromophore.</text>
</comment>
<comment type="similarity">
    <text evidence="6">Belongs to the phytochrome family.</text>
</comment>
<evidence type="ECO:0000250" key="1">
    <source>
        <dbReference type="UniProtKB" id="B4YB07"/>
    </source>
</evidence>
<evidence type="ECO:0000250" key="2">
    <source>
        <dbReference type="UniProtKB" id="P14712"/>
    </source>
</evidence>
<evidence type="ECO:0000255" key="3">
    <source>
        <dbReference type="PROSITE-ProRule" id="PRU00107"/>
    </source>
</evidence>
<evidence type="ECO:0000255" key="4">
    <source>
        <dbReference type="PROSITE-ProRule" id="PRU00140"/>
    </source>
</evidence>
<evidence type="ECO:0000256" key="5">
    <source>
        <dbReference type="SAM" id="MobiDB-lite"/>
    </source>
</evidence>
<evidence type="ECO:0000305" key="6"/>